<keyword id="KW-0274">FAD</keyword>
<keyword id="KW-0285">Flavoprotein</keyword>
<keyword id="KW-0378">Hydrolase</keyword>
<keyword id="KW-1185">Reference proteome</keyword>
<gene>
    <name evidence="3" type="primary">acd</name>
    <name evidence="4" type="ordered locus">Bxeno_B1100</name>
    <name evidence="5" type="ORF">Bxe_B1901</name>
</gene>
<feature type="chain" id="PRO_0000452009" description="3-sulfinopropanoyl-CoA desulfinase">
    <location>
        <begin position="1"/>
        <end position="388"/>
    </location>
</feature>
<feature type="binding site" evidence="1">
    <location>
        <begin position="121"/>
        <end position="124"/>
    </location>
    <ligand>
        <name>FAD</name>
        <dbReference type="ChEBI" id="CHEBI:57692"/>
    </ligand>
</feature>
<feature type="binding site" evidence="1">
    <location>
        <position position="130"/>
    </location>
    <ligand>
        <name>FAD</name>
        <dbReference type="ChEBI" id="CHEBI:57692"/>
    </ligand>
</feature>
<feature type="binding site" evidence="1">
    <location>
        <begin position="153"/>
        <end position="156"/>
    </location>
    <ligand>
        <name>FAD</name>
        <dbReference type="ChEBI" id="CHEBI:57692"/>
    </ligand>
</feature>
<feature type="binding site" evidence="1">
    <location>
        <begin position="240"/>
        <end position="241"/>
    </location>
    <ligand>
        <name>substrate</name>
    </ligand>
</feature>
<feature type="binding site" evidence="1">
    <location>
        <position position="269"/>
    </location>
    <ligand>
        <name>FAD</name>
        <dbReference type="ChEBI" id="CHEBI:57692"/>
    </ligand>
</feature>
<feature type="binding site" evidence="1">
    <location>
        <position position="336"/>
    </location>
    <ligand>
        <name>FAD</name>
        <dbReference type="ChEBI" id="CHEBI:57692"/>
    </ligand>
</feature>
<feature type="binding site" evidence="1">
    <location>
        <begin position="363"/>
        <end position="367"/>
    </location>
    <ligand>
        <name>FAD</name>
        <dbReference type="ChEBI" id="CHEBI:57692"/>
    </ligand>
</feature>
<feature type="binding site" evidence="1">
    <location>
        <position position="384"/>
    </location>
    <ligand>
        <name>FAD</name>
        <dbReference type="ChEBI" id="CHEBI:57692"/>
    </ligand>
</feature>
<feature type="site" description="Important for activity" evidence="1">
    <location>
        <position position="84"/>
    </location>
</feature>
<sequence length="388" mass="41875">MFELTDAQRQLQQSARRLALEAIAPHAAQTDRSEQYPWHTVEALREQRLMGMTLPPEYGGKGASYFDTVLVIEELSKVCAASGRIMVESNMGAIGAIMKYGSDAQKQLAARLVLAGDKPAICITEPQAGSAASDMQTRAERRGDTWHLSGCKHWITGGGVSKLHFVFARAIEDGKDTGIAGFIVVGPDVPGMTIQRIPAMGIRGVPEARIEFDDMRVRHDMKVTPPGRTEAGFAGLMNAYNAQRVGAATVALGIAQGAFDLALDYAKRREQFGRPIAEFQGLQWMLADMSIQLEAARLMVWKAAASGSEFPSMFAAAQAKIAAGEAAIKVTNDALQIHGAVGYGRDLPLERMVRDARMFTISGGTAQILRTQVAGTLLGQKLSQRRSA</sequence>
<comment type="function">
    <text evidence="2">Catalyzes the conversion 3-sulfinopropanoyl-CoA (3SP-CoA) to propanoyl-CoA by abstraction of sulfite. Does not show dehydrogenase activity.</text>
</comment>
<comment type="catalytic activity">
    <reaction evidence="2">
        <text>3-sulfinopropanoyl-CoA + H2O = propanoyl-CoA + sulfite + H(+)</text>
        <dbReference type="Rhea" id="RHEA:41624"/>
        <dbReference type="ChEBI" id="CHEBI:15377"/>
        <dbReference type="ChEBI" id="CHEBI:15378"/>
        <dbReference type="ChEBI" id="CHEBI:17359"/>
        <dbReference type="ChEBI" id="CHEBI:57392"/>
        <dbReference type="ChEBI" id="CHEBI:78349"/>
        <dbReference type="EC" id="3.13.1.4"/>
    </reaction>
    <physiologicalReaction direction="left-to-right" evidence="2">
        <dbReference type="Rhea" id="RHEA:41625"/>
    </physiologicalReaction>
</comment>
<comment type="cofactor">
    <cofactor evidence="2">
        <name>FAD</name>
        <dbReference type="ChEBI" id="CHEBI:57692"/>
    </cofactor>
    <text evidence="1">Binds 1 FAD per subunit.</text>
</comment>
<comment type="biophysicochemical properties">
    <kinetics>
        <KM evidence="2">0.027 mM for 3SP-CoA</KM>
        <Vmax evidence="2">1.58 umol/min/mg enzyme</Vmax>
        <text evidence="2">kcat is 1.1 sec(-1).</text>
    </kinetics>
</comment>
<comment type="subunit">
    <text evidence="2">Homotrimer or homotetramer.</text>
</comment>
<comment type="similarity">
    <text evidence="4">Belongs to the acyl-CoA dehydrogenase family.</text>
</comment>
<evidence type="ECO:0000250" key="1">
    <source>
        <dbReference type="UniProtKB" id="K4L7X3"/>
    </source>
</evidence>
<evidence type="ECO:0000269" key="2">
    <source>
    </source>
</evidence>
<evidence type="ECO:0000303" key="3">
    <source>
    </source>
</evidence>
<evidence type="ECO:0000305" key="4"/>
<evidence type="ECO:0000312" key="5">
    <source>
        <dbReference type="EMBL" id="ABE34068.1"/>
    </source>
</evidence>
<reference key="1">
    <citation type="journal article" date="2006" name="Proc. Natl. Acad. Sci. U.S.A.">
        <title>Burkholderia xenovorans LB400 harbors a multi-replicon, 9.73-Mbp genome shaped for versatility.</title>
        <authorList>
            <person name="Chain P.S.G."/>
            <person name="Denef V.J."/>
            <person name="Konstantinidis K.T."/>
            <person name="Vergez L.M."/>
            <person name="Agullo L."/>
            <person name="Reyes V.L."/>
            <person name="Hauser L."/>
            <person name="Cordova M."/>
            <person name="Gomez L."/>
            <person name="Gonzalez M."/>
            <person name="Land M."/>
            <person name="Lao V."/>
            <person name="Larimer F."/>
            <person name="LiPuma J.J."/>
            <person name="Mahenthiralingam E."/>
            <person name="Malfatti S.A."/>
            <person name="Marx C.J."/>
            <person name="Parnell J.J."/>
            <person name="Ramette A."/>
            <person name="Richardson P."/>
            <person name="Seeger M."/>
            <person name="Smith D."/>
            <person name="Spilker T."/>
            <person name="Sul W.J."/>
            <person name="Tsoi T.V."/>
            <person name="Ulrich L.E."/>
            <person name="Zhulin I.B."/>
            <person name="Tiedje J.M."/>
        </authorList>
    </citation>
    <scope>NUCLEOTIDE SEQUENCE [LARGE SCALE GENOMIC DNA]</scope>
    <source>
        <strain>LB400</strain>
    </source>
</reference>
<reference key="2">
    <citation type="journal article" date="2014" name="J. Bacteriol.">
        <title>Identification of 3-sulfinopropionyl coenzyme A (CoA) desulfinases within the Acyl-CoA dehydrogenase superfamily.</title>
        <authorList>
            <person name="Schuermann M."/>
            <person name="Demming R.M."/>
            <person name="Krewing M."/>
            <person name="Rose J."/>
            <person name="Wuebbeler J.H."/>
            <person name="Steinbuechel A."/>
        </authorList>
    </citation>
    <scope>FUNCTION</scope>
    <scope>CATALYTIC ACTIVITY</scope>
    <scope>COFACTOR</scope>
    <scope>BIOPHYSICOCHEMICAL PROPERTIES</scope>
    <scope>SUBUNIT</scope>
    <source>
        <strain>LB400</strain>
    </source>
</reference>
<proteinExistence type="evidence at protein level"/>
<organism>
    <name type="scientific">Paraburkholderia xenovorans (strain LB400)</name>
    <dbReference type="NCBI Taxonomy" id="266265"/>
    <lineage>
        <taxon>Bacteria</taxon>
        <taxon>Pseudomonadati</taxon>
        <taxon>Pseudomonadota</taxon>
        <taxon>Betaproteobacteria</taxon>
        <taxon>Burkholderiales</taxon>
        <taxon>Burkholderiaceae</taxon>
        <taxon>Paraburkholderia</taxon>
    </lineage>
</organism>
<protein>
    <recommendedName>
        <fullName evidence="4">3-sulfinopropanoyl-CoA desulfinase</fullName>
        <ecNumber evidence="2">3.13.1.4</ecNumber>
    </recommendedName>
    <alternativeName>
        <fullName evidence="3">3-sulfinopropionyl coenzyme A desulfinase</fullName>
        <shortName evidence="4">3-sulfinopropionyl-CoA desulfinase</shortName>
        <shortName evidence="3">3SP-CoA desulfinase</shortName>
    </alternativeName>
</protein>
<name>SPCAD_PARXL</name>
<dbReference type="EC" id="3.13.1.4" evidence="2"/>
<dbReference type="EMBL" id="CP000271">
    <property type="protein sequence ID" value="ABE34068.1"/>
    <property type="molecule type" value="Genomic_DNA"/>
</dbReference>
<dbReference type="RefSeq" id="WP_011491418.1">
    <property type="nucleotide sequence ID" value="NC_007952.1"/>
</dbReference>
<dbReference type="SMR" id="Q13PC1"/>
<dbReference type="STRING" id="266265.Bxe_B1901"/>
<dbReference type="KEGG" id="bxb:DR64_7210"/>
<dbReference type="KEGG" id="bxe:Bxe_B1901"/>
<dbReference type="PATRIC" id="fig|266265.5.peg.5834"/>
<dbReference type="eggNOG" id="COG1960">
    <property type="taxonomic scope" value="Bacteria"/>
</dbReference>
<dbReference type="OrthoDB" id="9770681at2"/>
<dbReference type="Proteomes" id="UP000001817">
    <property type="component" value="Chromosome 2"/>
</dbReference>
<dbReference type="GO" id="GO:0003995">
    <property type="term" value="F:acyl-CoA dehydrogenase activity"/>
    <property type="evidence" value="ECO:0007669"/>
    <property type="project" value="TreeGrafter"/>
</dbReference>
<dbReference type="GO" id="GO:0050660">
    <property type="term" value="F:flavin adenine dinucleotide binding"/>
    <property type="evidence" value="ECO:0007669"/>
    <property type="project" value="InterPro"/>
</dbReference>
<dbReference type="GO" id="GO:0016787">
    <property type="term" value="F:hydrolase activity"/>
    <property type="evidence" value="ECO:0007669"/>
    <property type="project" value="UniProtKB-KW"/>
</dbReference>
<dbReference type="FunFam" id="1.20.140.10:FF:000004">
    <property type="entry name" value="Acyl-CoA dehydrogenase FadE25"/>
    <property type="match status" value="1"/>
</dbReference>
<dbReference type="FunFam" id="1.10.540.10:FF:000026">
    <property type="entry name" value="Acyl-CoA dehydrogenase medium chain"/>
    <property type="match status" value="1"/>
</dbReference>
<dbReference type="Gene3D" id="1.10.540.10">
    <property type="entry name" value="Acyl-CoA dehydrogenase/oxidase, N-terminal domain"/>
    <property type="match status" value="1"/>
</dbReference>
<dbReference type="Gene3D" id="2.40.110.10">
    <property type="entry name" value="Butyryl-CoA Dehydrogenase, subunit A, domain 2"/>
    <property type="match status" value="1"/>
</dbReference>
<dbReference type="Gene3D" id="1.20.140.10">
    <property type="entry name" value="Butyryl-CoA Dehydrogenase, subunit A, domain 3"/>
    <property type="match status" value="1"/>
</dbReference>
<dbReference type="InterPro" id="IPR050032">
    <property type="entry name" value="AcdA"/>
</dbReference>
<dbReference type="InterPro" id="IPR006091">
    <property type="entry name" value="Acyl-CoA_Oxase/DH_mid-dom"/>
</dbReference>
<dbReference type="InterPro" id="IPR046373">
    <property type="entry name" value="Acyl-CoA_Oxase/DH_mid-dom_sf"/>
</dbReference>
<dbReference type="InterPro" id="IPR036250">
    <property type="entry name" value="AcylCo_DH-like_C"/>
</dbReference>
<dbReference type="InterPro" id="IPR009075">
    <property type="entry name" value="AcylCo_DH/oxidase_C"/>
</dbReference>
<dbReference type="InterPro" id="IPR013786">
    <property type="entry name" value="AcylCoA_DH/ox_N"/>
</dbReference>
<dbReference type="InterPro" id="IPR037069">
    <property type="entry name" value="AcylCoA_DH/ox_N_sf"/>
</dbReference>
<dbReference type="InterPro" id="IPR009100">
    <property type="entry name" value="AcylCoA_DH/oxidase_NM_dom_sf"/>
</dbReference>
<dbReference type="NCBIfam" id="NF042439">
    <property type="entry name" value="SulpropCoADesulf"/>
    <property type="match status" value="1"/>
</dbReference>
<dbReference type="PANTHER" id="PTHR43884">
    <property type="entry name" value="ACYL-COA DEHYDROGENASE"/>
    <property type="match status" value="1"/>
</dbReference>
<dbReference type="PANTHER" id="PTHR43884:SF12">
    <property type="entry name" value="ISOVALERYL-COA DEHYDROGENASE, MITOCHONDRIAL-RELATED"/>
    <property type="match status" value="1"/>
</dbReference>
<dbReference type="Pfam" id="PF00441">
    <property type="entry name" value="Acyl-CoA_dh_1"/>
    <property type="match status" value="1"/>
</dbReference>
<dbReference type="Pfam" id="PF02770">
    <property type="entry name" value="Acyl-CoA_dh_M"/>
    <property type="match status" value="1"/>
</dbReference>
<dbReference type="Pfam" id="PF02771">
    <property type="entry name" value="Acyl-CoA_dh_N"/>
    <property type="match status" value="1"/>
</dbReference>
<dbReference type="PIRSF" id="PIRSF016578">
    <property type="entry name" value="HsaA"/>
    <property type="match status" value="1"/>
</dbReference>
<dbReference type="SUPFAM" id="SSF47203">
    <property type="entry name" value="Acyl-CoA dehydrogenase C-terminal domain-like"/>
    <property type="match status" value="1"/>
</dbReference>
<dbReference type="SUPFAM" id="SSF56645">
    <property type="entry name" value="Acyl-CoA dehydrogenase NM domain-like"/>
    <property type="match status" value="1"/>
</dbReference>
<accession>Q13PC1</accession>